<feature type="chain" id="PRO_0000419628" description="Ribosomal silencing factor RsfS">
    <location>
        <begin position="1"/>
        <end position="133"/>
    </location>
</feature>
<feature type="helix" evidence="3">
    <location>
        <begin position="16"/>
        <end position="29"/>
    </location>
</feature>
<feature type="strand" evidence="3">
    <location>
        <begin position="33"/>
        <end position="39"/>
    </location>
</feature>
<feature type="turn" evidence="3">
    <location>
        <begin position="41"/>
        <end position="43"/>
    </location>
</feature>
<feature type="strand" evidence="3">
    <location>
        <begin position="48"/>
        <end position="54"/>
    </location>
</feature>
<feature type="helix" evidence="3">
    <location>
        <begin position="58"/>
        <end position="76"/>
    </location>
</feature>
<feature type="strand" evidence="3">
    <location>
        <begin position="81"/>
        <end position="84"/>
    </location>
</feature>
<feature type="strand" evidence="3">
    <location>
        <begin position="89"/>
        <end position="94"/>
    </location>
</feature>
<feature type="strand" evidence="3">
    <location>
        <begin position="96"/>
        <end position="103"/>
    </location>
</feature>
<feature type="helix" evidence="3">
    <location>
        <begin position="105"/>
        <end position="116"/>
    </location>
</feature>
<feature type="turn" evidence="3">
    <location>
        <begin position="117"/>
        <end position="120"/>
    </location>
</feature>
<reference key="1">
    <citation type="journal article" date="2005" name="Nat. Biotechnol.">
        <title>The genome sequence of the ethanologenic bacterium Zymomonas mobilis ZM4.</title>
        <authorList>
            <person name="Seo J.-S."/>
            <person name="Chong H."/>
            <person name="Park H.S."/>
            <person name="Yoon K.-O."/>
            <person name="Jung C."/>
            <person name="Kim J.J."/>
            <person name="Hong J.H."/>
            <person name="Kim H."/>
            <person name="Kim J.-H."/>
            <person name="Kil J.-I."/>
            <person name="Park C.J."/>
            <person name="Oh H.-M."/>
            <person name="Lee J.-S."/>
            <person name="Jin S.-J."/>
            <person name="Um H.-W."/>
            <person name="Lee H.-J."/>
            <person name="Oh S.-J."/>
            <person name="Kim J.Y."/>
            <person name="Kang H.L."/>
            <person name="Lee S.Y."/>
            <person name="Lee K.J."/>
            <person name="Kang H.S."/>
        </authorList>
    </citation>
    <scope>NUCLEOTIDE SEQUENCE [LARGE SCALE GENOMIC DNA]</scope>
    <source>
        <strain>ATCC 31821 / ZM4 / CP4</strain>
    </source>
</reference>
<reference evidence="2" key="2">
    <citation type="submission" date="2011-11" db="PDB data bank">
        <title>Crystal structure of Iojap-like protein from Zymomonas mobilis.</title>
        <authorList>
            <person name="Chang C."/>
            <person name="Li H."/>
            <person name="Bearden J."/>
            <person name="Joachimiak A."/>
        </authorList>
    </citation>
    <scope>X-RAY CRYSTALLOGRAPHY (1.75 ANGSTROMS)</scope>
</reference>
<dbReference type="EMBL" id="AE008692">
    <property type="protein sequence ID" value="AAV90287.1"/>
    <property type="molecule type" value="Genomic_DNA"/>
</dbReference>
<dbReference type="RefSeq" id="WP_011241412.1">
    <property type="nucleotide sequence ID" value="NZ_CP035711.1"/>
</dbReference>
<dbReference type="PDB" id="3UPS">
    <property type="method" value="X-ray"/>
    <property type="resolution" value="1.75 A"/>
    <property type="chains" value="A=1-133"/>
</dbReference>
<dbReference type="PDBsum" id="3UPS"/>
<dbReference type="SMR" id="Q5NLX3"/>
<dbReference type="STRING" id="264203.ZMO1663"/>
<dbReference type="KEGG" id="zmo:ZMO1663"/>
<dbReference type="eggNOG" id="COG0799">
    <property type="taxonomic scope" value="Bacteria"/>
</dbReference>
<dbReference type="HOGENOM" id="CLU_092688_6_0_5"/>
<dbReference type="EvolutionaryTrace" id="Q5NLX3"/>
<dbReference type="Proteomes" id="UP000001173">
    <property type="component" value="Chromosome"/>
</dbReference>
<dbReference type="GO" id="GO:0005737">
    <property type="term" value="C:cytoplasm"/>
    <property type="evidence" value="ECO:0007669"/>
    <property type="project" value="UniProtKB-SubCell"/>
</dbReference>
<dbReference type="GO" id="GO:0043023">
    <property type="term" value="F:ribosomal large subunit binding"/>
    <property type="evidence" value="ECO:0007669"/>
    <property type="project" value="TreeGrafter"/>
</dbReference>
<dbReference type="GO" id="GO:0042256">
    <property type="term" value="P:cytosolic ribosome assembly"/>
    <property type="evidence" value="ECO:0007669"/>
    <property type="project" value="UniProtKB-UniRule"/>
</dbReference>
<dbReference type="GO" id="GO:0090071">
    <property type="term" value="P:negative regulation of ribosome biogenesis"/>
    <property type="evidence" value="ECO:0007669"/>
    <property type="project" value="UniProtKB-UniRule"/>
</dbReference>
<dbReference type="GO" id="GO:0017148">
    <property type="term" value="P:negative regulation of translation"/>
    <property type="evidence" value="ECO:0007669"/>
    <property type="project" value="UniProtKB-UniRule"/>
</dbReference>
<dbReference type="Gene3D" id="3.30.460.10">
    <property type="entry name" value="Beta Polymerase, domain 2"/>
    <property type="match status" value="1"/>
</dbReference>
<dbReference type="HAMAP" id="MF_01477">
    <property type="entry name" value="Iojap_RsfS"/>
    <property type="match status" value="1"/>
</dbReference>
<dbReference type="InterPro" id="IPR004394">
    <property type="entry name" value="Iojap/RsfS/C7orf30"/>
</dbReference>
<dbReference type="InterPro" id="IPR043519">
    <property type="entry name" value="NT_sf"/>
</dbReference>
<dbReference type="NCBIfam" id="TIGR00090">
    <property type="entry name" value="rsfS_iojap_ybeB"/>
    <property type="match status" value="1"/>
</dbReference>
<dbReference type="PANTHER" id="PTHR21043">
    <property type="entry name" value="IOJAP SUPERFAMILY ORTHOLOG"/>
    <property type="match status" value="1"/>
</dbReference>
<dbReference type="PANTHER" id="PTHR21043:SF0">
    <property type="entry name" value="MITOCHONDRIAL ASSEMBLY OF RIBOSOMAL LARGE SUBUNIT PROTEIN 1"/>
    <property type="match status" value="1"/>
</dbReference>
<dbReference type="Pfam" id="PF02410">
    <property type="entry name" value="RsfS"/>
    <property type="match status" value="1"/>
</dbReference>
<dbReference type="SUPFAM" id="SSF81301">
    <property type="entry name" value="Nucleotidyltransferase"/>
    <property type="match status" value="1"/>
</dbReference>
<gene>
    <name evidence="1" type="primary">rsfS</name>
    <name type="ordered locus">ZMO1663</name>
</gene>
<accession>Q5NLX3</accession>
<sequence length="133" mass="14543">MPAPSSPRKNQTSFDPEMLLKLVTDSLDDDQALEIATIPLAGKSSIADYMVIASGRSSRQVTAMAQKLADRIKAATGYVSKIEGLPAADWVLLDAGDIIIHLFRPEVRSFYNLERMWGFGDESDQPVSQSVLS</sequence>
<evidence type="ECO:0000255" key="1">
    <source>
        <dbReference type="HAMAP-Rule" id="MF_01477"/>
    </source>
</evidence>
<evidence type="ECO:0000312" key="2">
    <source>
        <dbReference type="PDB" id="3UPS"/>
    </source>
</evidence>
<evidence type="ECO:0007829" key="3">
    <source>
        <dbReference type="PDB" id="3UPS"/>
    </source>
</evidence>
<comment type="function">
    <text evidence="1">Functions as a ribosomal silencing factor. Interacts with ribosomal protein uL14 (rplN), blocking formation of intersubunit bridge B8. Prevents association of the 30S and 50S ribosomal subunits and the formation of functional ribosomes, thus repressing translation.</text>
</comment>
<comment type="subunit">
    <text evidence="1">Interacts with ribosomal protein uL14 (rplN).</text>
</comment>
<comment type="subcellular location">
    <subcellularLocation>
        <location evidence="1">Cytoplasm</location>
    </subcellularLocation>
</comment>
<comment type="similarity">
    <text evidence="1">Belongs to the Iojap/RsfS family.</text>
</comment>
<organism>
    <name type="scientific">Zymomonas mobilis subsp. mobilis (strain ATCC 31821 / ZM4 / CP4)</name>
    <dbReference type="NCBI Taxonomy" id="264203"/>
    <lineage>
        <taxon>Bacteria</taxon>
        <taxon>Pseudomonadati</taxon>
        <taxon>Pseudomonadota</taxon>
        <taxon>Alphaproteobacteria</taxon>
        <taxon>Sphingomonadales</taxon>
        <taxon>Zymomonadaceae</taxon>
        <taxon>Zymomonas</taxon>
    </lineage>
</organism>
<proteinExistence type="evidence at protein level"/>
<protein>
    <recommendedName>
        <fullName evidence="1">Ribosomal silencing factor RsfS</fullName>
    </recommendedName>
</protein>
<name>IOJAP_ZYMMO</name>
<keyword id="KW-0002">3D-structure</keyword>
<keyword id="KW-0963">Cytoplasm</keyword>
<keyword id="KW-1185">Reference proteome</keyword>
<keyword id="KW-0678">Repressor</keyword>
<keyword id="KW-0810">Translation regulation</keyword>